<sequence>MPIPKAFALLGPTACGKTALALKIAETLPVEIISLDSALVYTGMDIGTAKPSASERAFVPHHLIDIITPVQTYSAARFVEDCTRLIGEITARGKCPLIVGGTMMYFRALTQGLNDLPEADACLRADLDEQKQMYGLDFLYRTLQKVDPETACRLKPNDSQRIERALEVYYLTGKPMSEHLGRQSPHTLPFDLHTAALIPENRARLHENIALRFHLMLEQGFIGEVENLRRRYPGLTADSPAIRCVGYRQAWEYLDGKTDFPAFVEKGIAATRQLAKRQLTWLRKTPLDCVADPFSDGTSCTRLIEAAKRFFGA</sequence>
<evidence type="ECO:0000255" key="1">
    <source>
        <dbReference type="HAMAP-Rule" id="MF_00185"/>
    </source>
</evidence>
<evidence type="ECO:0000305" key="2"/>
<comment type="function">
    <text evidence="1">Catalyzes the transfer of a dimethylallyl group onto the adenine at position 37 in tRNAs that read codons beginning with uridine, leading to the formation of N6-(dimethylallyl)adenosine (i(6)A).</text>
</comment>
<comment type="catalytic activity">
    <reaction evidence="1">
        <text>adenosine(37) in tRNA + dimethylallyl diphosphate = N(6)-dimethylallyladenosine(37) in tRNA + diphosphate</text>
        <dbReference type="Rhea" id="RHEA:26482"/>
        <dbReference type="Rhea" id="RHEA-COMP:10162"/>
        <dbReference type="Rhea" id="RHEA-COMP:10375"/>
        <dbReference type="ChEBI" id="CHEBI:33019"/>
        <dbReference type="ChEBI" id="CHEBI:57623"/>
        <dbReference type="ChEBI" id="CHEBI:74411"/>
        <dbReference type="ChEBI" id="CHEBI:74415"/>
        <dbReference type="EC" id="2.5.1.75"/>
    </reaction>
</comment>
<comment type="cofactor">
    <cofactor evidence="1">
        <name>Mg(2+)</name>
        <dbReference type="ChEBI" id="CHEBI:18420"/>
    </cofactor>
</comment>
<comment type="subunit">
    <text evidence="1">Monomer.</text>
</comment>
<comment type="similarity">
    <text evidence="1">Belongs to the IPP transferase family.</text>
</comment>
<comment type="sequence caution" evidence="2">
    <conflict type="erroneous initiation">
        <sequence resource="EMBL-CDS" id="ABX73059"/>
    </conflict>
</comment>
<feature type="chain" id="PRO_0000377239" description="tRNA dimethylallyltransferase">
    <location>
        <begin position="1"/>
        <end position="313"/>
    </location>
</feature>
<feature type="region of interest" description="Interaction with substrate tRNA" evidence="1">
    <location>
        <begin position="36"/>
        <end position="39"/>
    </location>
</feature>
<feature type="region of interest" description="Interaction with substrate tRNA" evidence="1">
    <location>
        <begin position="160"/>
        <end position="164"/>
    </location>
</feature>
<feature type="region of interest" description="Interaction with substrate tRNA" evidence="1">
    <location>
        <begin position="243"/>
        <end position="248"/>
    </location>
</feature>
<feature type="binding site" evidence="1">
    <location>
        <begin position="11"/>
        <end position="18"/>
    </location>
    <ligand>
        <name>ATP</name>
        <dbReference type="ChEBI" id="CHEBI:30616"/>
    </ligand>
</feature>
<feature type="binding site" evidence="1">
    <location>
        <begin position="13"/>
        <end position="18"/>
    </location>
    <ligand>
        <name>substrate</name>
    </ligand>
</feature>
<feature type="site" description="Interaction with substrate tRNA" evidence="1">
    <location>
        <position position="102"/>
    </location>
</feature>
<feature type="site" description="Interaction with substrate tRNA" evidence="1">
    <location>
        <position position="124"/>
    </location>
</feature>
<protein>
    <recommendedName>
        <fullName evidence="1">tRNA dimethylallyltransferase</fullName>
        <ecNumber evidence="1">2.5.1.75</ecNumber>
    </recommendedName>
    <alternativeName>
        <fullName evidence="1">Dimethylallyl diphosphate:tRNA dimethylallyltransferase</fullName>
        <shortName evidence="1">DMAPP:tRNA dimethylallyltransferase</shortName>
        <shortName evidence="1">DMATase</shortName>
    </alternativeName>
    <alternativeName>
        <fullName evidence="1">Isopentenyl-diphosphate:tRNA isopentenyltransferase</fullName>
        <shortName evidence="1">IPP transferase</shortName>
        <shortName evidence="1">IPPT</shortName>
        <shortName evidence="1">IPTase</shortName>
    </alternativeName>
</protein>
<keyword id="KW-0067">ATP-binding</keyword>
<keyword id="KW-0460">Magnesium</keyword>
<keyword id="KW-0547">Nucleotide-binding</keyword>
<keyword id="KW-0808">Transferase</keyword>
<keyword id="KW-0819">tRNA processing</keyword>
<name>MIAA_NEIM0</name>
<accession>A9M4D3</accession>
<dbReference type="EC" id="2.5.1.75" evidence="1"/>
<dbReference type="EMBL" id="CP000381">
    <property type="protein sequence ID" value="ABX73059.1"/>
    <property type="status" value="ALT_INIT"/>
    <property type="molecule type" value="Genomic_DNA"/>
</dbReference>
<dbReference type="RefSeq" id="WP_017629168.1">
    <property type="nucleotide sequence ID" value="NC_010120.1"/>
</dbReference>
<dbReference type="SMR" id="A9M4D3"/>
<dbReference type="KEGG" id="nmn:NMCC_0877"/>
<dbReference type="HOGENOM" id="CLU_032616_0_0_4"/>
<dbReference type="Proteomes" id="UP000001177">
    <property type="component" value="Chromosome"/>
</dbReference>
<dbReference type="GO" id="GO:0005524">
    <property type="term" value="F:ATP binding"/>
    <property type="evidence" value="ECO:0007669"/>
    <property type="project" value="UniProtKB-UniRule"/>
</dbReference>
<dbReference type="GO" id="GO:0052381">
    <property type="term" value="F:tRNA dimethylallyltransferase activity"/>
    <property type="evidence" value="ECO:0007669"/>
    <property type="project" value="UniProtKB-UniRule"/>
</dbReference>
<dbReference type="GO" id="GO:0006400">
    <property type="term" value="P:tRNA modification"/>
    <property type="evidence" value="ECO:0007669"/>
    <property type="project" value="TreeGrafter"/>
</dbReference>
<dbReference type="FunFam" id="1.10.20.140:FF:000001">
    <property type="entry name" value="tRNA dimethylallyltransferase"/>
    <property type="match status" value="1"/>
</dbReference>
<dbReference type="Gene3D" id="1.10.20.140">
    <property type="match status" value="1"/>
</dbReference>
<dbReference type="Gene3D" id="3.40.50.300">
    <property type="entry name" value="P-loop containing nucleotide triphosphate hydrolases"/>
    <property type="match status" value="1"/>
</dbReference>
<dbReference type="HAMAP" id="MF_00185">
    <property type="entry name" value="IPP_trans"/>
    <property type="match status" value="1"/>
</dbReference>
<dbReference type="InterPro" id="IPR039657">
    <property type="entry name" value="Dimethylallyltransferase"/>
</dbReference>
<dbReference type="InterPro" id="IPR018022">
    <property type="entry name" value="IPT"/>
</dbReference>
<dbReference type="InterPro" id="IPR027417">
    <property type="entry name" value="P-loop_NTPase"/>
</dbReference>
<dbReference type="NCBIfam" id="TIGR00174">
    <property type="entry name" value="miaA"/>
    <property type="match status" value="1"/>
</dbReference>
<dbReference type="PANTHER" id="PTHR11088">
    <property type="entry name" value="TRNA DIMETHYLALLYLTRANSFERASE"/>
    <property type="match status" value="1"/>
</dbReference>
<dbReference type="PANTHER" id="PTHR11088:SF60">
    <property type="entry name" value="TRNA DIMETHYLALLYLTRANSFERASE"/>
    <property type="match status" value="1"/>
</dbReference>
<dbReference type="Pfam" id="PF01715">
    <property type="entry name" value="IPPT"/>
    <property type="match status" value="1"/>
</dbReference>
<dbReference type="SUPFAM" id="SSF52540">
    <property type="entry name" value="P-loop containing nucleoside triphosphate hydrolases"/>
    <property type="match status" value="1"/>
</dbReference>
<gene>
    <name evidence="1" type="primary">miaA</name>
    <name type="ordered locus">NMCC_0877</name>
</gene>
<reference key="1">
    <citation type="journal article" date="2008" name="Genomics">
        <title>Characterization of ST-4821 complex, a unique Neisseria meningitidis clone.</title>
        <authorList>
            <person name="Peng J."/>
            <person name="Yang L."/>
            <person name="Yang F."/>
            <person name="Yang J."/>
            <person name="Yan Y."/>
            <person name="Nie H."/>
            <person name="Zhang X."/>
            <person name="Xiong Z."/>
            <person name="Jiang Y."/>
            <person name="Cheng F."/>
            <person name="Xu X."/>
            <person name="Chen S."/>
            <person name="Sun L."/>
            <person name="Li W."/>
            <person name="Shen Y."/>
            <person name="Shao Z."/>
            <person name="Liang X."/>
            <person name="Xu J."/>
            <person name="Jin Q."/>
        </authorList>
    </citation>
    <scope>NUCLEOTIDE SEQUENCE [LARGE SCALE GENOMIC DNA]</scope>
    <source>
        <strain>053442</strain>
    </source>
</reference>
<proteinExistence type="inferred from homology"/>
<organism>
    <name type="scientific">Neisseria meningitidis serogroup C (strain 053442)</name>
    <dbReference type="NCBI Taxonomy" id="374833"/>
    <lineage>
        <taxon>Bacteria</taxon>
        <taxon>Pseudomonadati</taxon>
        <taxon>Pseudomonadota</taxon>
        <taxon>Betaproteobacteria</taxon>
        <taxon>Neisseriales</taxon>
        <taxon>Neisseriaceae</taxon>
        <taxon>Neisseria</taxon>
    </lineage>
</organism>